<gene>
    <name evidence="1" type="primary">rplO</name>
    <name type="ordered locus">BPUM_0121</name>
</gene>
<name>RL15_BACP2</name>
<evidence type="ECO:0000255" key="1">
    <source>
        <dbReference type="HAMAP-Rule" id="MF_01341"/>
    </source>
</evidence>
<evidence type="ECO:0000256" key="2">
    <source>
        <dbReference type="SAM" id="MobiDB-lite"/>
    </source>
</evidence>
<evidence type="ECO:0000305" key="3"/>
<comment type="function">
    <text evidence="1">Binds to the 23S rRNA.</text>
</comment>
<comment type="subunit">
    <text evidence="1">Part of the 50S ribosomal subunit.</text>
</comment>
<comment type="similarity">
    <text evidence="1">Belongs to the universal ribosomal protein uL15 family.</text>
</comment>
<dbReference type="EMBL" id="CP000813">
    <property type="protein sequence ID" value="ABV60821.1"/>
    <property type="molecule type" value="Genomic_DNA"/>
</dbReference>
<dbReference type="RefSeq" id="WP_012008709.1">
    <property type="nucleotide sequence ID" value="NZ_VEIS01000020.1"/>
</dbReference>
<dbReference type="SMR" id="A8F9A4"/>
<dbReference type="STRING" id="315750.BPUM_0121"/>
<dbReference type="GeneID" id="5619363"/>
<dbReference type="KEGG" id="bpu:BPUM_0121"/>
<dbReference type="eggNOG" id="COG0200">
    <property type="taxonomic scope" value="Bacteria"/>
</dbReference>
<dbReference type="HOGENOM" id="CLU_055188_4_2_9"/>
<dbReference type="OrthoDB" id="9810293at2"/>
<dbReference type="Proteomes" id="UP000001355">
    <property type="component" value="Chromosome"/>
</dbReference>
<dbReference type="GO" id="GO:0022625">
    <property type="term" value="C:cytosolic large ribosomal subunit"/>
    <property type="evidence" value="ECO:0007669"/>
    <property type="project" value="TreeGrafter"/>
</dbReference>
<dbReference type="GO" id="GO:0019843">
    <property type="term" value="F:rRNA binding"/>
    <property type="evidence" value="ECO:0007669"/>
    <property type="project" value="UniProtKB-UniRule"/>
</dbReference>
<dbReference type="GO" id="GO:0003735">
    <property type="term" value="F:structural constituent of ribosome"/>
    <property type="evidence" value="ECO:0007669"/>
    <property type="project" value="InterPro"/>
</dbReference>
<dbReference type="GO" id="GO:0006412">
    <property type="term" value="P:translation"/>
    <property type="evidence" value="ECO:0007669"/>
    <property type="project" value="UniProtKB-UniRule"/>
</dbReference>
<dbReference type="FunFam" id="3.100.10.10:FF:000004">
    <property type="entry name" value="50S ribosomal protein L15"/>
    <property type="match status" value="1"/>
</dbReference>
<dbReference type="Gene3D" id="3.100.10.10">
    <property type="match status" value="1"/>
</dbReference>
<dbReference type="HAMAP" id="MF_01341">
    <property type="entry name" value="Ribosomal_uL15"/>
    <property type="match status" value="1"/>
</dbReference>
<dbReference type="InterPro" id="IPR030878">
    <property type="entry name" value="Ribosomal_uL15"/>
</dbReference>
<dbReference type="InterPro" id="IPR021131">
    <property type="entry name" value="Ribosomal_uL15/eL18"/>
</dbReference>
<dbReference type="InterPro" id="IPR036227">
    <property type="entry name" value="Ribosomal_uL15/eL18_sf"/>
</dbReference>
<dbReference type="InterPro" id="IPR005749">
    <property type="entry name" value="Ribosomal_uL15_bac-type"/>
</dbReference>
<dbReference type="InterPro" id="IPR001196">
    <property type="entry name" value="Ribosomal_uL15_CS"/>
</dbReference>
<dbReference type="NCBIfam" id="TIGR01071">
    <property type="entry name" value="rplO_bact"/>
    <property type="match status" value="1"/>
</dbReference>
<dbReference type="PANTHER" id="PTHR12934">
    <property type="entry name" value="50S RIBOSOMAL PROTEIN L15"/>
    <property type="match status" value="1"/>
</dbReference>
<dbReference type="PANTHER" id="PTHR12934:SF11">
    <property type="entry name" value="LARGE RIBOSOMAL SUBUNIT PROTEIN UL15M"/>
    <property type="match status" value="1"/>
</dbReference>
<dbReference type="Pfam" id="PF00828">
    <property type="entry name" value="Ribosomal_L27A"/>
    <property type="match status" value="1"/>
</dbReference>
<dbReference type="SUPFAM" id="SSF52080">
    <property type="entry name" value="Ribosomal proteins L15p and L18e"/>
    <property type="match status" value="1"/>
</dbReference>
<dbReference type="PROSITE" id="PS00475">
    <property type="entry name" value="RIBOSOMAL_L15"/>
    <property type="match status" value="1"/>
</dbReference>
<reference key="1">
    <citation type="journal article" date="2007" name="PLoS ONE">
        <title>Paradoxical DNA repair and peroxide resistance gene conservation in Bacillus pumilus SAFR-032.</title>
        <authorList>
            <person name="Gioia J."/>
            <person name="Yerrapragada S."/>
            <person name="Qin X."/>
            <person name="Jiang H."/>
            <person name="Igboeli O.C."/>
            <person name="Muzny D."/>
            <person name="Dugan-Rocha S."/>
            <person name="Ding Y."/>
            <person name="Hawes A."/>
            <person name="Liu W."/>
            <person name="Perez L."/>
            <person name="Kovar C."/>
            <person name="Dinh H."/>
            <person name="Lee S."/>
            <person name="Nazareth L."/>
            <person name="Blyth P."/>
            <person name="Holder M."/>
            <person name="Buhay C."/>
            <person name="Tirumalai M.R."/>
            <person name="Liu Y."/>
            <person name="Dasgupta I."/>
            <person name="Bokhetache L."/>
            <person name="Fujita M."/>
            <person name="Karouia F."/>
            <person name="Eswara Moorthy P."/>
            <person name="Siefert J."/>
            <person name="Uzman A."/>
            <person name="Buzumbo P."/>
            <person name="Verma A."/>
            <person name="Zwiya H."/>
            <person name="McWilliams B.D."/>
            <person name="Olowu A."/>
            <person name="Clinkenbeard K.D."/>
            <person name="Newcombe D."/>
            <person name="Golebiewski L."/>
            <person name="Petrosino J.F."/>
            <person name="Nicholson W.L."/>
            <person name="Fox G.E."/>
            <person name="Venkateswaran K."/>
            <person name="Highlander S.K."/>
            <person name="Weinstock G.M."/>
        </authorList>
    </citation>
    <scope>NUCLEOTIDE SEQUENCE [LARGE SCALE GENOMIC DNA]</scope>
    <source>
        <strain>SAFR-032</strain>
    </source>
</reference>
<protein>
    <recommendedName>
        <fullName evidence="1">Large ribosomal subunit protein uL15</fullName>
    </recommendedName>
    <alternativeName>
        <fullName evidence="3">50S ribosomal protein L15</fullName>
    </alternativeName>
</protein>
<keyword id="KW-0687">Ribonucleoprotein</keyword>
<keyword id="KW-0689">Ribosomal protein</keyword>
<keyword id="KW-0694">RNA-binding</keyword>
<keyword id="KW-0699">rRNA-binding</keyword>
<sequence>MKLHELKPSEGSRKERNRVGRGIGSGNGKTSGKGHKGQNARSGGGVRPGFEGGQMPLFQRLPKRGFTNINRKDYAVINLDRLNSFDEGTEVTPELLLETGAISKLKAGVKILGNGKLEKKLTVKANKFSASAKEAIEAAGGTAEVI</sequence>
<feature type="chain" id="PRO_1000067661" description="Large ribosomal subunit protein uL15">
    <location>
        <begin position="1"/>
        <end position="146"/>
    </location>
</feature>
<feature type="region of interest" description="Disordered" evidence="2">
    <location>
        <begin position="1"/>
        <end position="57"/>
    </location>
</feature>
<feature type="compositionally biased region" description="Basic and acidic residues" evidence="2">
    <location>
        <begin position="1"/>
        <end position="18"/>
    </location>
</feature>
<feature type="compositionally biased region" description="Gly residues" evidence="2">
    <location>
        <begin position="21"/>
        <end position="31"/>
    </location>
</feature>
<feature type="compositionally biased region" description="Gly residues" evidence="2">
    <location>
        <begin position="42"/>
        <end position="52"/>
    </location>
</feature>
<organism>
    <name type="scientific">Bacillus pumilus (strain SAFR-032)</name>
    <dbReference type="NCBI Taxonomy" id="315750"/>
    <lineage>
        <taxon>Bacteria</taxon>
        <taxon>Bacillati</taxon>
        <taxon>Bacillota</taxon>
        <taxon>Bacilli</taxon>
        <taxon>Bacillales</taxon>
        <taxon>Bacillaceae</taxon>
        <taxon>Bacillus</taxon>
    </lineage>
</organism>
<accession>A8F9A4</accession>
<proteinExistence type="inferred from homology"/>